<protein>
    <recommendedName>
        <fullName evidence="1">Serine--tRNA ligase</fullName>
        <ecNumber evidence="1">6.1.1.11</ecNumber>
    </recommendedName>
    <alternativeName>
        <fullName evidence="1">Seryl-tRNA synthetase</fullName>
        <shortName evidence="1">SerRS</shortName>
    </alternativeName>
    <alternativeName>
        <fullName evidence="1">Seryl-tRNA(Ser/Sec) synthetase</fullName>
    </alternativeName>
</protein>
<name>SYS_THEAC</name>
<dbReference type="EC" id="6.1.1.11" evidence="1"/>
<dbReference type="EMBL" id="AL445064">
    <property type="protein sequence ID" value="CAC11610.1"/>
    <property type="molecule type" value="Genomic_DNA"/>
</dbReference>
<dbReference type="RefSeq" id="WP_010900895.1">
    <property type="nucleotide sequence ID" value="NC_002578.1"/>
</dbReference>
<dbReference type="SMR" id="Q9HKX5"/>
<dbReference type="FunCoup" id="Q9HKX5">
    <property type="interactions" value="212"/>
</dbReference>
<dbReference type="STRING" id="273075.gene:9571688"/>
<dbReference type="PaxDb" id="273075-Ta0468"/>
<dbReference type="EnsemblBacteria" id="CAC11610">
    <property type="protein sequence ID" value="CAC11610"/>
    <property type="gene ID" value="CAC11610"/>
</dbReference>
<dbReference type="KEGG" id="tac:Ta0468"/>
<dbReference type="eggNOG" id="arCOG00403">
    <property type="taxonomic scope" value="Archaea"/>
</dbReference>
<dbReference type="HOGENOM" id="CLU_023797_0_1_2"/>
<dbReference type="InParanoid" id="Q9HKX5"/>
<dbReference type="OrthoDB" id="35932at2157"/>
<dbReference type="UniPathway" id="UPA00906">
    <property type="reaction ID" value="UER00895"/>
</dbReference>
<dbReference type="Proteomes" id="UP000001024">
    <property type="component" value="Chromosome"/>
</dbReference>
<dbReference type="GO" id="GO:0005737">
    <property type="term" value="C:cytoplasm"/>
    <property type="evidence" value="ECO:0007669"/>
    <property type="project" value="UniProtKB-SubCell"/>
</dbReference>
<dbReference type="GO" id="GO:0005524">
    <property type="term" value="F:ATP binding"/>
    <property type="evidence" value="ECO:0007669"/>
    <property type="project" value="UniProtKB-UniRule"/>
</dbReference>
<dbReference type="GO" id="GO:0004828">
    <property type="term" value="F:serine-tRNA ligase activity"/>
    <property type="evidence" value="ECO:0007669"/>
    <property type="project" value="UniProtKB-UniRule"/>
</dbReference>
<dbReference type="GO" id="GO:0016260">
    <property type="term" value="P:selenocysteine biosynthetic process"/>
    <property type="evidence" value="ECO:0007669"/>
    <property type="project" value="UniProtKB-UniRule"/>
</dbReference>
<dbReference type="GO" id="GO:0006434">
    <property type="term" value="P:seryl-tRNA aminoacylation"/>
    <property type="evidence" value="ECO:0007669"/>
    <property type="project" value="UniProtKB-UniRule"/>
</dbReference>
<dbReference type="CDD" id="cd00770">
    <property type="entry name" value="SerRS_core"/>
    <property type="match status" value="1"/>
</dbReference>
<dbReference type="Gene3D" id="3.30.930.10">
    <property type="entry name" value="Bira Bifunctional Protein, Domain 2"/>
    <property type="match status" value="1"/>
</dbReference>
<dbReference type="Gene3D" id="1.10.287.40">
    <property type="entry name" value="Serine-tRNA synthetase, tRNA binding domain"/>
    <property type="match status" value="1"/>
</dbReference>
<dbReference type="HAMAP" id="MF_00176">
    <property type="entry name" value="Ser_tRNA_synth_type1"/>
    <property type="match status" value="1"/>
</dbReference>
<dbReference type="InterPro" id="IPR002314">
    <property type="entry name" value="aa-tRNA-synt_IIb"/>
</dbReference>
<dbReference type="InterPro" id="IPR006195">
    <property type="entry name" value="aa-tRNA-synth_II"/>
</dbReference>
<dbReference type="InterPro" id="IPR045864">
    <property type="entry name" value="aa-tRNA-synth_II/BPL/LPL"/>
</dbReference>
<dbReference type="InterPro" id="IPR002317">
    <property type="entry name" value="Ser-tRNA-ligase_type_1"/>
</dbReference>
<dbReference type="InterPro" id="IPR015866">
    <property type="entry name" value="Ser-tRNA-synth_1_N"/>
</dbReference>
<dbReference type="InterPro" id="IPR042103">
    <property type="entry name" value="SerRS_1_N_sf"/>
</dbReference>
<dbReference type="InterPro" id="IPR033729">
    <property type="entry name" value="SerRS_core"/>
</dbReference>
<dbReference type="InterPro" id="IPR010978">
    <property type="entry name" value="tRNA-bd_arm"/>
</dbReference>
<dbReference type="NCBIfam" id="TIGR00414">
    <property type="entry name" value="serS"/>
    <property type="match status" value="1"/>
</dbReference>
<dbReference type="PANTHER" id="PTHR11778">
    <property type="entry name" value="SERYL-TRNA SYNTHETASE"/>
    <property type="match status" value="1"/>
</dbReference>
<dbReference type="Pfam" id="PF02403">
    <property type="entry name" value="Seryl_tRNA_N"/>
    <property type="match status" value="1"/>
</dbReference>
<dbReference type="Pfam" id="PF00587">
    <property type="entry name" value="tRNA-synt_2b"/>
    <property type="match status" value="1"/>
</dbReference>
<dbReference type="PIRSF" id="PIRSF001529">
    <property type="entry name" value="Ser-tRNA-synth_IIa"/>
    <property type="match status" value="1"/>
</dbReference>
<dbReference type="PRINTS" id="PR00981">
    <property type="entry name" value="TRNASYNTHSER"/>
</dbReference>
<dbReference type="SUPFAM" id="SSF55681">
    <property type="entry name" value="Class II aaRS and biotin synthetases"/>
    <property type="match status" value="1"/>
</dbReference>
<dbReference type="SUPFAM" id="SSF46589">
    <property type="entry name" value="tRNA-binding arm"/>
    <property type="match status" value="1"/>
</dbReference>
<dbReference type="PROSITE" id="PS50862">
    <property type="entry name" value="AA_TRNA_LIGASE_II"/>
    <property type="match status" value="1"/>
</dbReference>
<sequence>MIDVKLLRSNRELFEKNCEYRGVDKAPVEDFFRLDEEWRSINRELNGLRSQKNRETRKIAELIKNNGDASAEKKAVEDINARISDLENKLKKIEEERDRILWTIPNLVHESVPVCFGDENNQLVRYVGHAKVFRDDIEEFKKNSGNSQDYEVLDERPKSHVDLGLDLNVIDLESAARISGSRFYFIKNRLLKLEMALENYAVDFLSQRGFSIVEPPYMLNLESMRGATDLETFKDTLYKIEGEDLYLIATSEHSIAAMLSNQFLEEKDLPLRVAGISACFRREAGAHGKDTKGIFRVHQFNKIEQFVFCKPEDSWDFLEEILGNAEAIYRSLGIPYRVVNVCSGELGRLAAKKYDIEAWFPAQGKFREIVSASNDTDYQARSLNIKYRTSEGNRFVHTLNSTAIATTRILVAIMENFQEGDRIRIPDVLVPYTGFQYIEKG</sequence>
<proteinExistence type="inferred from homology"/>
<organism>
    <name type="scientific">Thermoplasma acidophilum (strain ATCC 25905 / DSM 1728 / JCM 9062 / NBRC 15155 / AMRC-C165)</name>
    <dbReference type="NCBI Taxonomy" id="273075"/>
    <lineage>
        <taxon>Archaea</taxon>
        <taxon>Methanobacteriati</taxon>
        <taxon>Thermoplasmatota</taxon>
        <taxon>Thermoplasmata</taxon>
        <taxon>Thermoplasmatales</taxon>
        <taxon>Thermoplasmataceae</taxon>
        <taxon>Thermoplasma</taxon>
    </lineage>
</organism>
<accession>Q9HKX5</accession>
<comment type="function">
    <text evidence="1">Catalyzes the attachment of serine to tRNA(Ser). Is also able to aminoacylate tRNA(Sec) with serine, to form the misacylated tRNA L-seryl-tRNA(Sec), which will be further converted into selenocysteinyl-tRNA(Sec).</text>
</comment>
<comment type="catalytic activity">
    <reaction evidence="1">
        <text>tRNA(Ser) + L-serine + ATP = L-seryl-tRNA(Ser) + AMP + diphosphate + H(+)</text>
        <dbReference type="Rhea" id="RHEA:12292"/>
        <dbReference type="Rhea" id="RHEA-COMP:9669"/>
        <dbReference type="Rhea" id="RHEA-COMP:9703"/>
        <dbReference type="ChEBI" id="CHEBI:15378"/>
        <dbReference type="ChEBI" id="CHEBI:30616"/>
        <dbReference type="ChEBI" id="CHEBI:33019"/>
        <dbReference type="ChEBI" id="CHEBI:33384"/>
        <dbReference type="ChEBI" id="CHEBI:78442"/>
        <dbReference type="ChEBI" id="CHEBI:78533"/>
        <dbReference type="ChEBI" id="CHEBI:456215"/>
        <dbReference type="EC" id="6.1.1.11"/>
    </reaction>
</comment>
<comment type="catalytic activity">
    <reaction evidence="1">
        <text>tRNA(Sec) + L-serine + ATP = L-seryl-tRNA(Sec) + AMP + diphosphate + H(+)</text>
        <dbReference type="Rhea" id="RHEA:42580"/>
        <dbReference type="Rhea" id="RHEA-COMP:9742"/>
        <dbReference type="Rhea" id="RHEA-COMP:10128"/>
        <dbReference type="ChEBI" id="CHEBI:15378"/>
        <dbReference type="ChEBI" id="CHEBI:30616"/>
        <dbReference type="ChEBI" id="CHEBI:33019"/>
        <dbReference type="ChEBI" id="CHEBI:33384"/>
        <dbReference type="ChEBI" id="CHEBI:78442"/>
        <dbReference type="ChEBI" id="CHEBI:78533"/>
        <dbReference type="ChEBI" id="CHEBI:456215"/>
        <dbReference type="EC" id="6.1.1.11"/>
    </reaction>
</comment>
<comment type="pathway">
    <text evidence="1">Aminoacyl-tRNA biosynthesis; selenocysteinyl-tRNA(Sec) biosynthesis; L-seryl-tRNA(Sec) from L-serine and tRNA(Sec): step 1/1.</text>
</comment>
<comment type="subunit">
    <text evidence="1">Homodimer. The tRNA molecule binds across the dimer.</text>
</comment>
<comment type="subcellular location">
    <subcellularLocation>
        <location evidence="1">Cytoplasm</location>
    </subcellularLocation>
</comment>
<comment type="domain">
    <text evidence="1">Consists of two distinct domains, a catalytic core and a N-terminal extension that is involved in tRNA binding.</text>
</comment>
<comment type="similarity">
    <text evidence="1">Belongs to the class-II aminoacyl-tRNA synthetase family. Type-1 seryl-tRNA synthetase subfamily.</text>
</comment>
<reference key="1">
    <citation type="journal article" date="2000" name="Nature">
        <title>The genome sequence of the thermoacidophilic scavenger Thermoplasma acidophilum.</title>
        <authorList>
            <person name="Ruepp A."/>
            <person name="Graml W."/>
            <person name="Santos-Martinez M.-L."/>
            <person name="Koretke K.K."/>
            <person name="Volker C."/>
            <person name="Mewes H.-W."/>
            <person name="Frishman D."/>
            <person name="Stocker S."/>
            <person name="Lupas A.N."/>
            <person name="Baumeister W."/>
        </authorList>
    </citation>
    <scope>NUCLEOTIDE SEQUENCE [LARGE SCALE GENOMIC DNA]</scope>
    <source>
        <strain>ATCC 25905 / DSM 1728 / JCM 9062 / NBRC 15155 / AMRC-C165</strain>
    </source>
</reference>
<keyword id="KW-0030">Aminoacyl-tRNA synthetase</keyword>
<keyword id="KW-0067">ATP-binding</keyword>
<keyword id="KW-0963">Cytoplasm</keyword>
<keyword id="KW-0436">Ligase</keyword>
<keyword id="KW-0547">Nucleotide-binding</keyword>
<keyword id="KW-0648">Protein biosynthesis</keyword>
<keyword id="KW-1185">Reference proteome</keyword>
<feature type="chain" id="PRO_0000122187" description="Serine--tRNA ligase">
    <location>
        <begin position="1"/>
        <end position="441"/>
    </location>
</feature>
<feature type="binding site" evidence="1">
    <location>
        <begin position="250"/>
        <end position="252"/>
    </location>
    <ligand>
        <name>L-serine</name>
        <dbReference type="ChEBI" id="CHEBI:33384"/>
    </ligand>
</feature>
<feature type="binding site" evidence="1">
    <location>
        <begin position="281"/>
        <end position="283"/>
    </location>
    <ligand>
        <name>ATP</name>
        <dbReference type="ChEBI" id="CHEBI:30616"/>
    </ligand>
</feature>
<feature type="binding site" evidence="1">
    <location>
        <position position="297"/>
    </location>
    <ligand>
        <name>ATP</name>
        <dbReference type="ChEBI" id="CHEBI:30616"/>
    </ligand>
</feature>
<feature type="binding site" evidence="1">
    <location>
        <position position="304"/>
    </location>
    <ligand>
        <name>L-serine</name>
        <dbReference type="ChEBI" id="CHEBI:33384"/>
    </ligand>
</feature>
<feature type="binding site" evidence="1">
    <location>
        <begin position="368"/>
        <end position="371"/>
    </location>
    <ligand>
        <name>ATP</name>
        <dbReference type="ChEBI" id="CHEBI:30616"/>
    </ligand>
</feature>
<feature type="binding site" evidence="1">
    <location>
        <position position="402"/>
    </location>
    <ligand>
        <name>L-serine</name>
        <dbReference type="ChEBI" id="CHEBI:33384"/>
    </ligand>
</feature>
<evidence type="ECO:0000255" key="1">
    <source>
        <dbReference type="HAMAP-Rule" id="MF_00176"/>
    </source>
</evidence>
<gene>
    <name evidence="1" type="primary">serS</name>
    <name type="ordered locus">Ta0468</name>
</gene>